<sequence>MASLPHCLSARPLVVAAAPGRPGPGPGPWLRGGARRRNAAFSAGNAGRRVGLRRSVASAVEVGVGEDEEEGVEEEEEEVEAVVMPERYALGGACRVLAGMPAPLGATALDGGVNFAVYSAGASAASLCLFTPDDLEADEVTEEVPLDPLFNRTGNVWHVFIEGELHNMLYGYRFDGMFAPHCGQYFDVSNVVVDPYAKAVISRGEYGVPGPGGDCWPQMAGMIPLPYSTFDWQGDLPLRYPQKDLVIYEMHLRGFTKHSSSNVEHPGTYIGAISKLDYLKELGVNCVELMPCHEFNELEYFSCSSKMNFWGYSTINFFSPMIRYSSGGIRNCGRDAINEFKTFVREAHKRGIEVIMDVVFNHTAEGNEKGPILSFRGIDNSTYYMLAPKGEFYNYSGCGNTFNCNHPVVREFIVDCLRYWVTEMHVDGFRFDLASIMTRGCSLWDPVNVYGSPVEGDMTTTGTPLATPPLIDMISNDPILGDVKLIAEAWDAGGLYQVGQFPHWKIWSEWNGKYRDIVRQFIKGTDGFAGGFAECLCGSPHLYQAGGRKPWHSINFVCAHDGFTLADLVTYNKKYNSSNGEDNRDGENHNLSWNCGEEGEFAGLSVKRLRKRQMRNFFVSLMVSQGVPMFYMGDEYGHTKGGNNNTYCHDHYVNYFRWDKKEESSDLQRFCSLMTKFRKQCESLGLADFPTAQRLHWHGHQPGKPDWSETSRFVAFSTKDETKGEIYVAFNASHLPAVVGLPERPGYRWEPLVDTGKPAPYDFLTDDLPDRAHAVHLFSHFLNSNLYPMLSYSSIILELQPDD</sequence>
<organism>
    <name type="scientific">Oryza sativa subsp. japonica</name>
    <name type="common">Rice</name>
    <dbReference type="NCBI Taxonomy" id="39947"/>
    <lineage>
        <taxon>Eukaryota</taxon>
        <taxon>Viridiplantae</taxon>
        <taxon>Streptophyta</taxon>
        <taxon>Embryophyta</taxon>
        <taxon>Tracheophyta</taxon>
        <taxon>Spermatophyta</taxon>
        <taxon>Magnoliopsida</taxon>
        <taxon>Liliopsida</taxon>
        <taxon>Poales</taxon>
        <taxon>Poaceae</taxon>
        <taxon>BOP clade</taxon>
        <taxon>Oryzoideae</taxon>
        <taxon>Oryzeae</taxon>
        <taxon>Oryzinae</taxon>
        <taxon>Oryza</taxon>
        <taxon>Oryza sativa</taxon>
    </lineage>
</organism>
<gene>
    <name evidence="9" type="primary">ISA1</name>
    <name evidence="11" type="synonym">ISA</name>
    <name evidence="10" type="synonym">SU1</name>
    <name evidence="13" type="ordered locus">Os08g0520900</name>
    <name evidence="12" type="ordered locus">LOC_Os08g40930</name>
</gene>
<reference key="1">
    <citation type="journal article" date="2003" name="Genome">
        <title>The sugary-type isoamylase gene from rice and Aegilops tauschii: characterization and comparison with maize and arabidopsis.</title>
        <authorList>
            <person name="Rahman S."/>
            <person name="Nakamura Y."/>
            <person name="Li Z."/>
            <person name="Clarke B."/>
            <person name="Fujita N."/>
            <person name="Mukai Y."/>
            <person name="Yamamoto M."/>
            <person name="Regina A."/>
            <person name="Tan Z."/>
            <person name="Kawasaki S."/>
            <person name="Morell M."/>
        </authorList>
    </citation>
    <scope>NUCLEOTIDE SEQUENCE [GENOMIC DNA]</scope>
    <source>
        <tissue>Leaf</tissue>
    </source>
</reference>
<reference key="2">
    <citation type="journal article" date="2009" name="Proc. Natl. Acad. Sci. U.S.A.">
        <title>Allelic diversities in rice starch biosynthesis lead to a diverse array of rice eating and cooking qualities.</title>
        <authorList>
            <person name="Tian Z."/>
            <person name="Qian Q."/>
            <person name="Liu Q."/>
            <person name="Yan M."/>
            <person name="Liu X."/>
            <person name="Yan C."/>
            <person name="Liu G."/>
            <person name="Gao Z."/>
            <person name="Tang S."/>
            <person name="Zeng D."/>
            <person name="Wang Y."/>
            <person name="Yu J."/>
            <person name="Gu M."/>
            <person name="Li J."/>
        </authorList>
    </citation>
    <scope>NUCLEOTIDE SEQUENCE [GENOMIC DNA]</scope>
</reference>
<reference key="3">
    <citation type="submission" date="2013-12" db="EMBL/GenBank/DDBJ databases">
        <title>Oryza sativa japonica TNG78 ISA1 gene, complete gene and upstream + downstream 1K region genomic sequence.</title>
        <authorList>
            <person name="Wei F.-J."/>
            <person name="Lin Y.-R."/>
            <person name="Hsing Y.-I."/>
        </authorList>
    </citation>
    <scope>NUCLEOTIDE SEQUENCE [GENOMIC DNA]</scope>
    <source>
        <strain>cv. Tainung 78</strain>
    </source>
</reference>
<reference key="4">
    <citation type="journal article" date="2005" name="Nature">
        <title>The map-based sequence of the rice genome.</title>
        <authorList>
            <consortium name="International rice genome sequencing project (IRGSP)"/>
        </authorList>
    </citation>
    <scope>NUCLEOTIDE SEQUENCE [LARGE SCALE GENOMIC DNA]</scope>
    <source>
        <strain>cv. Nipponbare</strain>
    </source>
</reference>
<reference key="5">
    <citation type="journal article" date="2008" name="Nucleic Acids Res.">
        <title>The rice annotation project database (RAP-DB): 2008 update.</title>
        <authorList>
            <consortium name="The rice annotation project (RAP)"/>
        </authorList>
    </citation>
    <scope>GENOME REANNOTATION</scope>
    <source>
        <strain>cv. Nipponbare</strain>
    </source>
</reference>
<reference key="6">
    <citation type="journal article" date="2013" name="Rice">
        <title>Improvement of the Oryza sativa Nipponbare reference genome using next generation sequence and optical map data.</title>
        <authorList>
            <person name="Kawahara Y."/>
            <person name="de la Bastide M."/>
            <person name="Hamilton J.P."/>
            <person name="Kanamori H."/>
            <person name="McCombie W.R."/>
            <person name="Ouyang S."/>
            <person name="Schwartz D.C."/>
            <person name="Tanaka T."/>
            <person name="Wu J."/>
            <person name="Zhou S."/>
            <person name="Childs K.L."/>
            <person name="Davidson R.M."/>
            <person name="Lin H."/>
            <person name="Quesada-Ocampo L."/>
            <person name="Vaillancourt B."/>
            <person name="Sakai H."/>
            <person name="Lee S.S."/>
            <person name="Kim J."/>
            <person name="Numa H."/>
            <person name="Itoh T."/>
            <person name="Buell C.R."/>
            <person name="Matsumoto T."/>
        </authorList>
    </citation>
    <scope>GENOME REANNOTATION</scope>
    <source>
        <strain>cv. Nipponbare</strain>
    </source>
</reference>
<reference key="7">
    <citation type="journal article" date="1999" name="Planta">
        <title>Purification, characterization, and cDNA structure of isoamylase from developing endosperm of rice.</title>
        <authorList>
            <person name="Fujita N."/>
            <person name="Kubo A."/>
            <person name="Francisco P.B."/>
            <person name="Nakakita M."/>
            <person name="Harada K."/>
            <person name="Minaka N."/>
            <person name="Nakamura Y."/>
        </authorList>
    </citation>
    <scope>PROTEIN SEQUENCE OF 55-85; 81-90; 392-401; 424-433 AND 489-498</scope>
    <scope>NUCLEOTIDE SEQUENCE [MRNA] OF 79-803</scope>
    <scope>CATALYTIC ACTIVITY</scope>
    <scope>BIOPHYSICOCHEMICAL PROPERTIES</scope>
    <scope>ACTIVITY REGULATION</scope>
    <source>
        <tissue>Endosperm</tissue>
    </source>
</reference>
<reference key="8">
    <citation type="journal article" date="1999" name="Plant Physiol.">
        <title>The starch-debranching enzymes isoamylase and pullulanase are both involved in amylopectin biosynthesis in rice endosperm.</title>
        <authorList>
            <person name="Kubo A."/>
            <person name="Fujita N."/>
            <person name="Harada K."/>
            <person name="Matsuda T."/>
            <person name="Satoh H."/>
            <person name="Nakamura Y."/>
        </authorList>
    </citation>
    <scope>FUNCTION</scope>
</reference>
<reference key="9">
    <citation type="journal article" date="2005" name="Plant Physiol.">
        <title>Complementation of sugary-1 phenotype in rice endosperm with the wheat isoamylase1 gene supports a direct role for isoamylase1 in amylopectin biosynthesis.</title>
        <authorList>
            <person name="Kubo A."/>
            <person name="Rahman S."/>
            <person name="Utsumi Y."/>
            <person name="Li Z."/>
            <person name="Mukai Y."/>
            <person name="Yamamoto M."/>
            <person name="Ugaki M."/>
            <person name="Harada K."/>
            <person name="Satoh H."/>
            <person name="Konik-Rose C."/>
            <person name="Morell M."/>
            <person name="Nakamura Y."/>
        </authorList>
    </citation>
    <scope>FUNCTION</scope>
    <scope>TISSUE SPECIFICITY</scope>
    <scope>DISRUPTION PHENOTYPE</scope>
</reference>
<reference key="10">
    <citation type="journal article" date="2006" name="Planta">
        <title>Structural and enzymatic characterization of the isoamylase1 homo-oligomer and the isoamylase1-isoamylase2 hetero-oligomer from rice endosperm.</title>
        <authorList>
            <person name="Utsumi Y."/>
            <person name="Nakamura Y."/>
        </authorList>
    </citation>
    <scope>FUNCTION</scope>
    <scope>SUBUNIT</scope>
</reference>
<reference key="11">
    <citation type="journal article" date="2011" name="Plant Physiol.">
        <title>Functional diversity of isoamylase oligomers: the ISA1 homo-oligomer is essential for amylopectin biosynthesis in rice endosperm.</title>
        <authorList>
            <person name="Utsumi Y."/>
            <person name="Utsumi C."/>
            <person name="Sawada T."/>
            <person name="Fujita N."/>
            <person name="Nakamura Y."/>
        </authorList>
    </citation>
    <scope>FUNCTION</scope>
    <scope>SUBUNIT</scope>
</reference>
<reference key="12">
    <citation type="journal article" date="2014" name="Plant J.">
        <title>FLOURY ENDOSPERM6 encodes a CBM48 domain-containing protein involved in compound granule formation and starch synthesis in rice endosperm.</title>
        <authorList>
            <person name="Peng C."/>
            <person name="Wang Y."/>
            <person name="Liu F."/>
            <person name="Ren Y."/>
            <person name="Zhou K."/>
            <person name="Lv J."/>
            <person name="Zheng M."/>
            <person name="Zhao S."/>
            <person name="Zhang L."/>
            <person name="Wang C."/>
            <person name="Jiang L."/>
            <person name="Zhang X."/>
            <person name="Guo X."/>
            <person name="Bao Y."/>
            <person name="Wan J."/>
        </authorList>
    </citation>
    <scope>INTERACTION WITH FLO6/SIP4</scope>
</reference>
<accession>D0TZF0</accession>
<accession>O80403</accession>
<accession>Q0J4C6</accession>
<accession>Q84L53</accession>
<keyword id="KW-0119">Carbohydrate metabolism</keyword>
<keyword id="KW-0150">Chloroplast</keyword>
<keyword id="KW-0903">Direct protein sequencing</keyword>
<keyword id="KW-0326">Glycosidase</keyword>
<keyword id="KW-0378">Hydrolase</keyword>
<keyword id="KW-0934">Plastid</keyword>
<keyword id="KW-1185">Reference proteome</keyword>
<keyword id="KW-0750">Starch biosynthesis</keyword>
<keyword id="KW-0809">Transit peptide</keyword>
<name>ISOA1_ORYSJ</name>
<feature type="transit peptide" description="Chloroplast" evidence="3">
    <location>
        <begin position="1"/>
        <end position="54"/>
    </location>
</feature>
<feature type="chain" id="PRO_0000441798" description="Isoamylase 1, chloroplastic">
    <location>
        <begin position="55"/>
        <end position="803"/>
    </location>
</feature>
<feature type="active site" description="Nucleophile" evidence="1">
    <location>
        <position position="432"/>
    </location>
</feature>
<feature type="active site" description="Proton donor" evidence="1">
    <location>
        <position position="488"/>
    </location>
</feature>
<feature type="site" description="Transition state stabilizer" evidence="1">
    <location>
        <position position="561"/>
    </location>
</feature>
<proteinExistence type="evidence at protein level"/>
<dbReference type="EC" id="3.2.1.68" evidence="3"/>
<dbReference type="EMBL" id="AB093426">
    <property type="protein sequence ID" value="BAC75533.1"/>
    <property type="status" value="ALT_SEQ"/>
    <property type="molecule type" value="Genomic_DNA"/>
</dbReference>
<dbReference type="EMBL" id="GQ150871">
    <property type="protein sequence ID" value="ACY56086.1"/>
    <property type="molecule type" value="Genomic_DNA"/>
</dbReference>
<dbReference type="EMBL" id="GQ150872">
    <property type="protein sequence ID" value="ACY56087.1"/>
    <property type="molecule type" value="Genomic_DNA"/>
</dbReference>
<dbReference type="EMBL" id="GQ150873">
    <property type="protein sequence ID" value="ACY56088.1"/>
    <property type="molecule type" value="Genomic_DNA"/>
</dbReference>
<dbReference type="EMBL" id="GQ150874">
    <property type="protein sequence ID" value="ACY56089.1"/>
    <property type="molecule type" value="Genomic_DNA"/>
</dbReference>
<dbReference type="EMBL" id="GQ150875">
    <property type="protein sequence ID" value="ACY56090.1"/>
    <property type="molecule type" value="Genomic_DNA"/>
</dbReference>
<dbReference type="EMBL" id="GQ150876">
    <property type="protein sequence ID" value="ACY56091.1"/>
    <property type="molecule type" value="Genomic_DNA"/>
</dbReference>
<dbReference type="EMBL" id="KF984388">
    <property type="protein sequence ID" value="AII21927.1"/>
    <property type="molecule type" value="Genomic_DNA"/>
</dbReference>
<dbReference type="EMBL" id="AP008214">
    <property type="protein sequence ID" value="BAF24185.1"/>
    <property type="status" value="ALT_INIT"/>
    <property type="molecule type" value="Genomic_DNA"/>
</dbReference>
<dbReference type="EMBL" id="AP014964">
    <property type="protein sequence ID" value="BAT06299.1"/>
    <property type="status" value="ALT_INIT"/>
    <property type="molecule type" value="Genomic_DNA"/>
</dbReference>
<dbReference type="EMBL" id="AB015615">
    <property type="protein sequence ID" value="BAA29041.1"/>
    <property type="status" value="ALT_FRAME"/>
    <property type="molecule type" value="mRNA"/>
</dbReference>
<dbReference type="RefSeq" id="XP_015650242.1">
    <property type="nucleotide sequence ID" value="XM_015794756.1"/>
</dbReference>
<dbReference type="SMR" id="D0TZF0"/>
<dbReference type="FunCoup" id="D0TZF0">
    <property type="interactions" value="330"/>
</dbReference>
<dbReference type="STRING" id="39947.D0TZF0"/>
<dbReference type="CAZy" id="CBM48">
    <property type="family name" value="Carbohydrate-Binding Module Family 48"/>
</dbReference>
<dbReference type="CAZy" id="GH13">
    <property type="family name" value="Glycoside Hydrolase Family 13"/>
</dbReference>
<dbReference type="PaxDb" id="39947-D0TZF0"/>
<dbReference type="EnsemblPlants" id="Os08t0520900-01">
    <property type="protein sequence ID" value="Os08t0520900-01"/>
    <property type="gene ID" value="Os08g0520900"/>
</dbReference>
<dbReference type="Gramene" id="Os08t0520900-01">
    <property type="protein sequence ID" value="Os08t0520900-01"/>
    <property type="gene ID" value="Os08g0520900"/>
</dbReference>
<dbReference type="KEGG" id="dosa:Os08g0520900"/>
<dbReference type="eggNOG" id="KOG0470">
    <property type="taxonomic scope" value="Eukaryota"/>
</dbReference>
<dbReference type="InParanoid" id="D0TZF0"/>
<dbReference type="OrthoDB" id="204980at2759"/>
<dbReference type="BRENDA" id="3.2.1.68">
    <property type="organism ID" value="4460"/>
</dbReference>
<dbReference type="PlantReactome" id="R-OSA-9626305">
    <property type="pathway name" value="Regulatory network of nutrient accumulation"/>
</dbReference>
<dbReference type="UniPathway" id="UPA00152"/>
<dbReference type="Proteomes" id="UP000000763">
    <property type="component" value="Chromosome 8"/>
</dbReference>
<dbReference type="Proteomes" id="UP000059680">
    <property type="component" value="Chromosome 8"/>
</dbReference>
<dbReference type="GO" id="GO:0010368">
    <property type="term" value="C:chloroplast isoamylase complex"/>
    <property type="evidence" value="ECO:0007669"/>
    <property type="project" value="EnsemblPlants"/>
</dbReference>
<dbReference type="GO" id="GO:0043033">
    <property type="term" value="C:isoamylase complex"/>
    <property type="evidence" value="ECO:0000314"/>
    <property type="project" value="UniProtKB"/>
</dbReference>
<dbReference type="GO" id="GO:0019156">
    <property type="term" value="F:isoamylase activity"/>
    <property type="evidence" value="ECO:0000314"/>
    <property type="project" value="UniProtKB"/>
</dbReference>
<dbReference type="GO" id="GO:0010021">
    <property type="term" value="P:amylopectin biosynthetic process"/>
    <property type="evidence" value="ECO:0000315"/>
    <property type="project" value="UniProtKB"/>
</dbReference>
<dbReference type="GO" id="GO:0019252">
    <property type="term" value="P:starch biosynthetic process"/>
    <property type="evidence" value="ECO:0007669"/>
    <property type="project" value="UniProtKB-UniPathway"/>
</dbReference>
<dbReference type="GO" id="GO:0005983">
    <property type="term" value="P:starch catabolic process"/>
    <property type="evidence" value="ECO:0000314"/>
    <property type="project" value="UniProtKB"/>
</dbReference>
<dbReference type="CDD" id="cd11326">
    <property type="entry name" value="AmyAc_Glg_debranch"/>
    <property type="match status" value="1"/>
</dbReference>
<dbReference type="CDD" id="cd02856">
    <property type="entry name" value="E_set_GDE_Isoamylase_N"/>
    <property type="match status" value="1"/>
</dbReference>
<dbReference type="FunFam" id="3.20.20.80:FF:000054">
    <property type="entry name" value="Glycogen debranching enzyme"/>
    <property type="match status" value="1"/>
</dbReference>
<dbReference type="FunFam" id="2.60.40.10:FF:001593">
    <property type="entry name" value="Isoamylase 1, chloroplastic"/>
    <property type="match status" value="1"/>
</dbReference>
<dbReference type="FunFam" id="2.60.40.1180:FF:000048">
    <property type="entry name" value="Isoamylase 1, chloroplastic"/>
    <property type="match status" value="1"/>
</dbReference>
<dbReference type="Gene3D" id="3.20.20.80">
    <property type="entry name" value="Glycosidases"/>
    <property type="match status" value="1"/>
</dbReference>
<dbReference type="Gene3D" id="2.60.40.1180">
    <property type="entry name" value="Golgi alpha-mannosidase II"/>
    <property type="match status" value="1"/>
</dbReference>
<dbReference type="Gene3D" id="2.60.40.10">
    <property type="entry name" value="Immunoglobulins"/>
    <property type="match status" value="1"/>
</dbReference>
<dbReference type="InterPro" id="IPR044505">
    <property type="entry name" value="GlgX_Isoamylase_N_E_set"/>
</dbReference>
<dbReference type="InterPro" id="IPR006047">
    <property type="entry name" value="Glyco_hydro_13_cat_dom"/>
</dbReference>
<dbReference type="InterPro" id="IPR004193">
    <property type="entry name" value="Glyco_hydro_13_N"/>
</dbReference>
<dbReference type="InterPro" id="IPR013780">
    <property type="entry name" value="Glyco_hydro_b"/>
</dbReference>
<dbReference type="InterPro" id="IPR017853">
    <property type="entry name" value="Glycoside_hydrolase_SF"/>
</dbReference>
<dbReference type="InterPro" id="IPR013783">
    <property type="entry name" value="Ig-like_fold"/>
</dbReference>
<dbReference type="InterPro" id="IPR014756">
    <property type="entry name" value="Ig_E-set"/>
</dbReference>
<dbReference type="InterPro" id="IPR048650">
    <property type="entry name" value="ISOA1-3-like_C"/>
</dbReference>
<dbReference type="PANTHER" id="PTHR43002">
    <property type="entry name" value="GLYCOGEN DEBRANCHING ENZYME"/>
    <property type="match status" value="1"/>
</dbReference>
<dbReference type="Pfam" id="PF00128">
    <property type="entry name" value="Alpha-amylase"/>
    <property type="match status" value="1"/>
</dbReference>
<dbReference type="Pfam" id="PF02922">
    <property type="entry name" value="CBM_48"/>
    <property type="match status" value="1"/>
</dbReference>
<dbReference type="Pfam" id="PF21156">
    <property type="entry name" value="ISOA1-3_C"/>
    <property type="match status" value="1"/>
</dbReference>
<dbReference type="SMART" id="SM00642">
    <property type="entry name" value="Aamy"/>
    <property type="match status" value="1"/>
</dbReference>
<dbReference type="SUPFAM" id="SSF51445">
    <property type="entry name" value="(Trans)glycosidases"/>
    <property type="match status" value="1"/>
</dbReference>
<dbReference type="SUPFAM" id="SSF81296">
    <property type="entry name" value="E set domains"/>
    <property type="match status" value="1"/>
</dbReference>
<dbReference type="SUPFAM" id="SSF51011">
    <property type="entry name" value="Glycosyl hydrolase domain"/>
    <property type="match status" value="1"/>
</dbReference>
<protein>
    <recommendedName>
        <fullName evidence="12">Isoamylase 1, chloroplastic</fullName>
        <shortName evidence="10">OsISA1</shortName>
        <ecNumber evidence="3">3.2.1.68</ecNumber>
    </recommendedName>
    <alternativeName>
        <fullName evidence="10">Protein SUGARY-1</fullName>
    </alternativeName>
</protein>
<comment type="function">
    <text evidence="4 5 6 7">Starch-debranching enzyme involved in amylopectin biosynthesis in endosperm. Functions by removing excess branches or improper branches that interfere with the formation of double helices of the cluster chains of amylopectin and crystallization of starch (PubMed:10517831, PubMed:15618430, PubMed:16953433, PubMed:21436381). Works as ISA1 homooligomer or together with ISA2 as heterooligomer. The heterooligomer ISA1 and ISA2 possesses higher affinity than the ISA1 homooligomer for various branched polyglucans in vitro, but no marked differences exist in chain preferences for debranching of amylopectin and phytoglycogen between these forms (PubMed:16953433, PubMed:21436381).</text>
</comment>
<comment type="catalytic activity">
    <reaction evidence="3">
        <text>Hydrolysis of (1-&gt;6)-alpha-D-glucosidic branch linkages in glycogen, amylopectin and their beta-limit dextrins.</text>
        <dbReference type="EC" id="3.2.1.68"/>
    </reaction>
</comment>
<comment type="activity regulation">
    <text evidence="3">Inhibited by copper chloride, mercury chloride, ammonium molybdate and para-chloromercuribenzoate.</text>
</comment>
<comment type="biophysicochemical properties">
    <phDependence>
        <text evidence="3">Optimum pH is 6.5 at 30 degrees Celsius.</text>
    </phDependence>
</comment>
<comment type="pathway">
    <text evidence="12">Glycan biosynthesis; starch biosynthesis.</text>
</comment>
<comment type="subunit">
    <text evidence="6 8">Forms a homo-pentamer and a hetero-hexamer composed of five ISA1 and one ISA2 (PubMed:16953433). Interacts with FLO6/SIP4 (PubMed:24456533).</text>
</comment>
<comment type="subcellular location">
    <subcellularLocation>
        <location evidence="2">Plastid</location>
        <location evidence="2">Chloroplast</location>
    </subcellularLocation>
</comment>
<comment type="tissue specificity">
    <text evidence="5">Highly expressed in developing endosperm. Expressed at low levels in leaves.</text>
</comment>
<comment type="disruption phenotype">
    <text evidence="5">Replacement of endosperm starch by a water-soluble highly and randomly branched polysaccharide structure called phytoglycogen.</text>
</comment>
<comment type="similarity">
    <text evidence="12">Belongs to the glycosyl hydrolase 13 family.</text>
</comment>
<comment type="sequence caution" evidence="12">
    <conflict type="frameshift">
        <sequence resource="EMBL-CDS" id="BAA29041"/>
    </conflict>
</comment>
<comment type="sequence caution" evidence="12">
    <conflict type="miscellaneous discrepancy">
        <sequence resource="EMBL-CDS" id="BAC75533"/>
    </conflict>
    <text>Sequencing errors.</text>
</comment>
<comment type="sequence caution" evidence="12">
    <conflict type="erroneous initiation">
        <sequence resource="EMBL-CDS" id="BAF24185"/>
    </conflict>
    <text>Truncated N-terminus.</text>
</comment>
<comment type="sequence caution" evidence="12">
    <conflict type="erroneous initiation">
        <sequence resource="EMBL-CDS" id="BAT06299"/>
    </conflict>
    <text>Truncated N-terminus.</text>
</comment>
<evidence type="ECO:0000250" key="1">
    <source>
        <dbReference type="UniProtKB" id="P04746"/>
    </source>
</evidence>
<evidence type="ECO:0000255" key="2"/>
<evidence type="ECO:0000269" key="3">
    <source>
    </source>
</evidence>
<evidence type="ECO:0000269" key="4">
    <source>
    </source>
</evidence>
<evidence type="ECO:0000269" key="5">
    <source>
    </source>
</evidence>
<evidence type="ECO:0000269" key="6">
    <source>
    </source>
</evidence>
<evidence type="ECO:0000269" key="7">
    <source>
    </source>
</evidence>
<evidence type="ECO:0000269" key="8">
    <source>
    </source>
</evidence>
<evidence type="ECO:0000303" key="9">
    <source>
    </source>
</evidence>
<evidence type="ECO:0000303" key="10">
    <source>
    </source>
</evidence>
<evidence type="ECO:0000303" key="11">
    <source>
    </source>
</evidence>
<evidence type="ECO:0000305" key="12"/>
<evidence type="ECO:0000312" key="13">
    <source>
        <dbReference type="EMBL" id="BAT06299.1"/>
    </source>
</evidence>